<comment type="function">
    <text evidence="10 11 12 13 14">Required for embryonic lymphatic vascular development, via promotion of parachordal lymphangioblast development, cell alignment and migration both dorsally and ventrally (PubMed:28179430, PubMed:28179432, PubMed:37097004). Required for the formation of facial lymphatic structures and formation of brain lymphatic endothelial cells (PubMed:37097004). Acts in tandem with vegfa signaling to promote tip cell specification and the stabilization of lumenized vascular connections between neighboring arterial intersegmental vessel sprouts, thereby facilitating dorsal longitudinal anastomotic vessel formation in response to low blood flow (PubMed:35312765). Plays a role in epidermal differentiation, potentially via mediating cell-cell adhesion (PubMed:27892606).</text>
</comment>
<comment type="subunit">
    <text evidence="14">Interacts with tie1 and tek/tie2.</text>
</comment>
<comment type="subcellular location">
    <subcellularLocation>
        <location evidence="1">Secreted</location>
    </subcellularLocation>
    <subcellularLocation>
        <location evidence="2">Nucleus</location>
    </subcellularLocation>
    <subcellularLocation>
        <location evidence="2">Cytoplasm</location>
    </subcellularLocation>
    <subcellularLocation>
        <location evidence="2">Membrane</location>
        <topology evidence="2">Peripheral membrane protein</topology>
    </subcellularLocation>
</comment>
<comment type="developmental stage">
    <text evidence="11 12 13 14">Expressed in dorsal epithelial cells above the neural tube and in individual neurons of the neural tube at 48 hpf (at protein level) (PubMed:35312765). Expressed in the fin bud, the region abutting the middle cerebral vessel and the posterior cardinal vein region at 48 hpf (PubMed:28179432). Expressed juxtaposed to sprouting lymphatic endothelial cells around the primary head sinus at 50 hpf (at protein level) (PubMed:37097004). Expressed in the ceratohyal underneath the eye and in the branchial arch region at 72 hpf (PubMed:28179432). Expressed in non-endothelial cells abutting the dorsal aorta and the posterior cardinal vein at 34 hpf, the number of cells expressing svep1 around the posterior cardinal vein increases at 72 hpf (PubMed:28179432). Expressed in the horizontal myoseptum region in cells adjacent to parachordal lymphangioblasts at 48 to 78 hpf (PubMed:28179432). Abundantly expressed in the region between the dorsal aorta and the posterior cardinal vein at 3 and 5 dpf (PubMed:28179432). Expressed in cells adjacent to migrating brain lymphatic endothelial cells at 3 dpf (at protein level) (PubMed:37097004). Expressed in parachordal lymphangioblasts, intersegmental lymphatic vessels and thoracic duct region at 4 dpf (PubMed:28179430).</text>
</comment>
<comment type="disruption phenotype">
    <text evidence="10 11 12 13 14">Significant decrease in mean blood flow speed at 48 hpf (PubMed:35312765). In a tricaine-induced reduced blood flow model; reduced number of primary angiogenic sprouts that anastomose to their ipsilateral neighbors, mainly as a result of the regression of pre-existing connections between ipsilateral neighboring intersegmental vessels at 40 and 48 hpf (PubMed:35312765). This results in an increase in the number of gaps and a significant decrease in lumenised segments of the dorsal longitudinal anastomotic vessel at 48 hpf (PubMed:35312765). Increase in apln-positive endothelial cells and loss of klf2a expression in the intersegmental vessels compared to the dorsal-most region of the trunk vasculature at 48hpf (PubMed:35312765). Reduced formation of parachordal lymphangioblasts at the horizontal myoseptum from 32.5 hpf onwards (PubMed:28179432). Significantly reduced numbers of embryonic parachordal lymphoblasts at 2 dpf and brain lymphatic endothelial cells at 3 dpf (PubMed:37097004). Parachordal lymphangioblasts that do develop fail to migrate dorsally or ventrally along arterial intersegmental vessels at 2.5 dpf onwards, as a result the thoracic duct fails to form between the dorsal aorta and the posterior cardinal vein at 4 dpf (PubMed:28179430, PubMed:28179432, PubMed:37097004). Rugged morphology of the epidermis with perturbed micro-ridge formation in the center of keratinocytes, resulting in reduced epidermal cell-cell adhesion and desmosome-independent disadhesion between cells at 3 dpf (PubMed:27892606). Facial lymphatic defects including the loss of the facial collecting lymphatics vessel and reduction in size of the lateral facial lymphatic vessel, medial facial lymphatic vessel, facial lymphatic branchial arches and otolithic lymphatic vessel at 3 and 5 dpf (PubMed:37097004). Abnormalities of the jaw and embryos show edema around the heart, eye and intestine, and a 60% reduction in the number of venous sprouts which results in an increase in the number of intersegmental arteries compared to veins at 5 dpf (PubMed:28179432). Severe edema is evident around the gut and the eye at 6 dpf (PubMed:28179430). In a svep1 and ccbe1 double knockout model there is complete loss of the facial lymphatic architecture at 5 dpf (PubMed:37097004). In a tricaine-treated svep1 and flt1 double knockdown model, the dorsal longitudinal anastomotic vessel formation defects seen in svep1 knockdown models are rescued, there is also an increase in the number of apln-positive endothelial cells in arterial intersegmental vessels (PubMed:35312765). A svep1 and tnnt2a double knockout model shows a further increase in the number of embryos with gaps in the dorsal longitudinal anastomotic vessel and an increase in the number of short intersegmental vessels at 48 hpf (PubMed:35312765).</text>
</comment>
<dbReference type="EMBL" id="CR318603">
    <property type="status" value="NOT_ANNOTATED_CDS"/>
    <property type="molecule type" value="Genomic_DNA"/>
</dbReference>
<dbReference type="EMBL" id="CR376795">
    <property type="status" value="NOT_ANNOTATED_CDS"/>
    <property type="molecule type" value="Genomic_DNA"/>
</dbReference>
<dbReference type="RefSeq" id="XP_695742.6">
    <property type="nucleotide sequence ID" value="XM_690650.10"/>
</dbReference>
<dbReference type="FunCoup" id="A0A1D5NSM8">
    <property type="interactions" value="534"/>
</dbReference>
<dbReference type="STRING" id="7955.ENSDARP00000142845"/>
<dbReference type="PaxDb" id="7955-ENSDARP00000071352"/>
<dbReference type="Ensembl" id="ENSDART00000173642">
    <property type="protein sequence ID" value="ENSDARP00000142845"/>
    <property type="gene ID" value="ENSDARG00000013526"/>
</dbReference>
<dbReference type="GeneID" id="567357"/>
<dbReference type="KEGG" id="dre:567357"/>
<dbReference type="AGR" id="ZFIN:ZDB-GENE-110726-1"/>
<dbReference type="CTD" id="79987"/>
<dbReference type="ZFIN" id="ZDB-GENE-110726-1">
    <property type="gene designation" value="svep1"/>
</dbReference>
<dbReference type="eggNOG" id="KOG1217">
    <property type="taxonomic scope" value="Eukaryota"/>
</dbReference>
<dbReference type="eggNOG" id="KOG4297">
    <property type="taxonomic scope" value="Eukaryota"/>
</dbReference>
<dbReference type="OMA" id="NKNWDGN"/>
<dbReference type="OrthoDB" id="6515930at2759"/>
<dbReference type="PRO" id="PR:A0A1D5NSM8"/>
<dbReference type="Proteomes" id="UP000000437">
    <property type="component" value="Chromosome 7"/>
</dbReference>
<dbReference type="Bgee" id="ENSDARG00000013526">
    <property type="expression patterns" value="Expressed in spleen and 18 other cell types or tissues"/>
</dbReference>
<dbReference type="GO" id="GO:0005737">
    <property type="term" value="C:cytoplasm"/>
    <property type="evidence" value="ECO:0007669"/>
    <property type="project" value="UniProtKB-SubCell"/>
</dbReference>
<dbReference type="GO" id="GO:0005576">
    <property type="term" value="C:extracellular region"/>
    <property type="evidence" value="ECO:0007669"/>
    <property type="project" value="UniProtKB-SubCell"/>
</dbReference>
<dbReference type="GO" id="GO:0016020">
    <property type="term" value="C:membrane"/>
    <property type="evidence" value="ECO:0007669"/>
    <property type="project" value="UniProtKB-SubCell"/>
</dbReference>
<dbReference type="GO" id="GO:0005634">
    <property type="term" value="C:nucleus"/>
    <property type="evidence" value="ECO:0007669"/>
    <property type="project" value="UniProtKB-SubCell"/>
</dbReference>
<dbReference type="GO" id="GO:0005509">
    <property type="term" value="F:calcium ion binding"/>
    <property type="evidence" value="ECO:0007669"/>
    <property type="project" value="InterPro"/>
</dbReference>
<dbReference type="GO" id="GO:0016477">
    <property type="term" value="P:cell migration"/>
    <property type="evidence" value="ECO:0000315"/>
    <property type="project" value="MGI"/>
</dbReference>
<dbReference type="GO" id="GO:0009913">
    <property type="term" value="P:epidermal cell differentiation"/>
    <property type="evidence" value="ECO:0000315"/>
    <property type="project" value="ZFIN"/>
</dbReference>
<dbReference type="GO" id="GO:0008544">
    <property type="term" value="P:epidermis development"/>
    <property type="evidence" value="ECO:0000315"/>
    <property type="project" value="MGI"/>
</dbReference>
<dbReference type="GO" id="GO:0090136">
    <property type="term" value="P:epithelial cell-cell adhesion"/>
    <property type="evidence" value="ECO:0000315"/>
    <property type="project" value="MGI"/>
</dbReference>
<dbReference type="GO" id="GO:0001945">
    <property type="term" value="P:lymph vessel development"/>
    <property type="evidence" value="ECO:0000315"/>
    <property type="project" value="ZFIN"/>
</dbReference>
<dbReference type="GO" id="GO:0036303">
    <property type="term" value="P:lymph vessel morphogenesis"/>
    <property type="evidence" value="ECO:0000315"/>
    <property type="project" value="MGI"/>
</dbReference>
<dbReference type="CDD" id="cd00033">
    <property type="entry name" value="CCP"/>
    <property type="match status" value="35"/>
</dbReference>
<dbReference type="CDD" id="cd00054">
    <property type="entry name" value="EGF_CA"/>
    <property type="match status" value="8"/>
</dbReference>
<dbReference type="CDD" id="cd01450">
    <property type="entry name" value="vWFA_subfamily_ECM"/>
    <property type="match status" value="1"/>
</dbReference>
<dbReference type="FunFam" id="2.10.70.10:FF:000104">
    <property type="entry name" value="Complement component 4 binding protein beta"/>
    <property type="match status" value="1"/>
</dbReference>
<dbReference type="FunFam" id="2.10.25.10:FF:000123">
    <property type="entry name" value="Crumbs homolog 1 (Drosophila)"/>
    <property type="match status" value="1"/>
</dbReference>
<dbReference type="FunFam" id="2.10.70.10:FF:000011">
    <property type="entry name" value="CUB and sushi domain-containing protein 3 isoform A"/>
    <property type="match status" value="1"/>
</dbReference>
<dbReference type="FunFam" id="2.10.70.10:FF:000002">
    <property type="entry name" value="CUB and Sushi multiple domains 3"/>
    <property type="match status" value="1"/>
</dbReference>
<dbReference type="FunFam" id="2.10.25.10:FF:000425">
    <property type="entry name" value="Eyes shut homolog"/>
    <property type="match status" value="1"/>
</dbReference>
<dbReference type="FunFam" id="2.10.25.10:FF:000038">
    <property type="entry name" value="Fibrillin 2"/>
    <property type="match status" value="1"/>
</dbReference>
<dbReference type="FunFam" id="2.10.70.10:FF:000064">
    <property type="entry name" value="Fibulin 7"/>
    <property type="match status" value="1"/>
</dbReference>
<dbReference type="FunFam" id="2.10.70.10:FF:000086">
    <property type="entry name" value="Hig-anchoring scaffold protein, isoform A"/>
    <property type="match status" value="1"/>
</dbReference>
<dbReference type="FunFam" id="2.60.120.200:FF:000012">
    <property type="entry name" value="neuronal pentraxin receptor"/>
    <property type="match status" value="1"/>
</dbReference>
<dbReference type="FunFam" id="2.10.25.10:FF:000143">
    <property type="entry name" value="Protein crumbs 1"/>
    <property type="match status" value="2"/>
</dbReference>
<dbReference type="FunFam" id="2.10.25.10:FF:000225">
    <property type="entry name" value="Sushi, von Willebrand factor type A, EGF and pentraxin domain containing 1"/>
    <property type="match status" value="1"/>
</dbReference>
<dbReference type="FunFam" id="2.10.50.10:FF:000018">
    <property type="entry name" value="Sushi, von Willebrand factor type A, EGF and pentraxin domain-containing 1"/>
    <property type="match status" value="2"/>
</dbReference>
<dbReference type="FunFam" id="2.10.70.10:FF:000174">
    <property type="entry name" value="Sushi, von Willebrand factor type A, EGF and pentraxin domain-containing 1"/>
    <property type="match status" value="1"/>
</dbReference>
<dbReference type="FunFam" id="2.10.70.10:FF:000223">
    <property type="entry name" value="Sushi, von Willebrand factor type A, EGF and pentraxin domain-containing 1"/>
    <property type="match status" value="1"/>
</dbReference>
<dbReference type="FunFam" id="2.10.70.10:FF:000256">
    <property type="entry name" value="Sushi, von Willebrand factor type A, EGF and pentraxin domain-containing protein 1"/>
    <property type="match status" value="1"/>
</dbReference>
<dbReference type="FunFam" id="2.10.70.10:FF:000179">
    <property type="entry name" value="sushi, von Willebrand factor type A, EGF and pentraxin domain-containing protein 1 isoform X2"/>
    <property type="match status" value="1"/>
</dbReference>
<dbReference type="FunFam" id="2.10.25.10:FF:000309">
    <property type="entry name" value="Uncharacterized protein, isoform A"/>
    <property type="match status" value="1"/>
</dbReference>
<dbReference type="FunFam" id="2.10.70.10:FF:000003">
    <property type="entry name" value="Versican core protein"/>
    <property type="match status" value="4"/>
</dbReference>
<dbReference type="FunFam" id="2.10.25.10:FF:000006">
    <property type="entry name" value="Versican core protein-like isoform 1"/>
    <property type="match status" value="1"/>
</dbReference>
<dbReference type="Gene3D" id="2.60.120.200">
    <property type="match status" value="1"/>
</dbReference>
<dbReference type="Gene3D" id="2.10.70.10">
    <property type="entry name" value="Complement Module, domain 1"/>
    <property type="match status" value="35"/>
</dbReference>
<dbReference type="Gene3D" id="2.10.25.10">
    <property type="entry name" value="Laminin"/>
    <property type="match status" value="10"/>
</dbReference>
<dbReference type="Gene3D" id="2.10.50.10">
    <property type="entry name" value="Tumor Necrosis Factor Receptor, subunit A, domain 2"/>
    <property type="match status" value="3"/>
</dbReference>
<dbReference type="Gene3D" id="3.40.50.410">
    <property type="entry name" value="von Willebrand factor, type A domain"/>
    <property type="match status" value="1"/>
</dbReference>
<dbReference type="InterPro" id="IPR013320">
    <property type="entry name" value="ConA-like_dom_sf"/>
</dbReference>
<dbReference type="InterPro" id="IPR001881">
    <property type="entry name" value="EGF-like_Ca-bd_dom"/>
</dbReference>
<dbReference type="InterPro" id="IPR013032">
    <property type="entry name" value="EGF-like_CS"/>
</dbReference>
<dbReference type="InterPro" id="IPR000742">
    <property type="entry name" value="EGF-like_dom"/>
</dbReference>
<dbReference type="InterPro" id="IPR000152">
    <property type="entry name" value="EGF-type_Asp/Asn_hydroxyl_site"/>
</dbReference>
<dbReference type="InterPro" id="IPR018097">
    <property type="entry name" value="EGF_Ca-bd_CS"/>
</dbReference>
<dbReference type="InterPro" id="IPR024731">
    <property type="entry name" value="EGF_dom"/>
</dbReference>
<dbReference type="InterPro" id="IPR009030">
    <property type="entry name" value="Growth_fac_rcpt_cys_sf"/>
</dbReference>
<dbReference type="InterPro" id="IPR003410">
    <property type="entry name" value="HYR_dom"/>
</dbReference>
<dbReference type="InterPro" id="IPR001759">
    <property type="entry name" value="Pentraxin-related"/>
</dbReference>
<dbReference type="InterPro" id="IPR035976">
    <property type="entry name" value="Sushi/SCR/CCP_sf"/>
</dbReference>
<dbReference type="InterPro" id="IPR000436">
    <property type="entry name" value="Sushi_SCR_CCP_dom"/>
</dbReference>
<dbReference type="InterPro" id="IPR011641">
    <property type="entry name" value="Tyr-kin_ephrin_A/B_rcpt-like"/>
</dbReference>
<dbReference type="InterPro" id="IPR002035">
    <property type="entry name" value="VWF_A"/>
</dbReference>
<dbReference type="InterPro" id="IPR036465">
    <property type="entry name" value="vWFA_dom_sf"/>
</dbReference>
<dbReference type="PANTHER" id="PTHR46393:SF7">
    <property type="entry name" value="COMPLEMENT C2"/>
    <property type="match status" value="1"/>
</dbReference>
<dbReference type="PANTHER" id="PTHR46393">
    <property type="entry name" value="SUSHI DOMAIN-CONTAINING PROTEIN"/>
    <property type="match status" value="1"/>
</dbReference>
<dbReference type="Pfam" id="PF00008">
    <property type="entry name" value="EGF"/>
    <property type="match status" value="5"/>
</dbReference>
<dbReference type="Pfam" id="PF12947">
    <property type="entry name" value="EGF_3"/>
    <property type="match status" value="1"/>
</dbReference>
<dbReference type="Pfam" id="PF07699">
    <property type="entry name" value="Ephrin_rec_like"/>
    <property type="match status" value="4"/>
</dbReference>
<dbReference type="Pfam" id="PF12661">
    <property type="entry name" value="hEGF"/>
    <property type="match status" value="3"/>
</dbReference>
<dbReference type="Pfam" id="PF02494">
    <property type="entry name" value="HYR"/>
    <property type="match status" value="2"/>
</dbReference>
<dbReference type="Pfam" id="PF00354">
    <property type="entry name" value="Pentaxin"/>
    <property type="match status" value="1"/>
</dbReference>
<dbReference type="Pfam" id="PF00084">
    <property type="entry name" value="Sushi"/>
    <property type="match status" value="34"/>
</dbReference>
<dbReference type="Pfam" id="PF00092">
    <property type="entry name" value="VWA"/>
    <property type="match status" value="1"/>
</dbReference>
<dbReference type="PRINTS" id="PR00895">
    <property type="entry name" value="PENTAXIN"/>
</dbReference>
<dbReference type="SMART" id="SM00032">
    <property type="entry name" value="CCP"/>
    <property type="match status" value="35"/>
</dbReference>
<dbReference type="SMART" id="SM00181">
    <property type="entry name" value="EGF"/>
    <property type="match status" value="10"/>
</dbReference>
<dbReference type="SMART" id="SM00179">
    <property type="entry name" value="EGF_CA"/>
    <property type="match status" value="8"/>
</dbReference>
<dbReference type="SMART" id="SM01411">
    <property type="entry name" value="Ephrin_rec_like"/>
    <property type="match status" value="5"/>
</dbReference>
<dbReference type="SMART" id="SM00159">
    <property type="entry name" value="PTX"/>
    <property type="match status" value="1"/>
</dbReference>
<dbReference type="SMART" id="SM00327">
    <property type="entry name" value="VWA"/>
    <property type="match status" value="1"/>
</dbReference>
<dbReference type="SUPFAM" id="SSF57535">
    <property type="entry name" value="Complement control module/SCR domain"/>
    <property type="match status" value="35"/>
</dbReference>
<dbReference type="SUPFAM" id="SSF49899">
    <property type="entry name" value="Concanavalin A-like lectins/glucanases"/>
    <property type="match status" value="1"/>
</dbReference>
<dbReference type="SUPFAM" id="SSF57196">
    <property type="entry name" value="EGF/Laminin"/>
    <property type="match status" value="1"/>
</dbReference>
<dbReference type="SUPFAM" id="SSF57184">
    <property type="entry name" value="Growth factor receptor domain"/>
    <property type="match status" value="4"/>
</dbReference>
<dbReference type="SUPFAM" id="SSF53300">
    <property type="entry name" value="vWA-like"/>
    <property type="match status" value="1"/>
</dbReference>
<dbReference type="PROSITE" id="PS00010">
    <property type="entry name" value="ASX_HYDROXYL"/>
    <property type="match status" value="5"/>
</dbReference>
<dbReference type="PROSITE" id="PS00022">
    <property type="entry name" value="EGF_1"/>
    <property type="match status" value="9"/>
</dbReference>
<dbReference type="PROSITE" id="PS01186">
    <property type="entry name" value="EGF_2"/>
    <property type="match status" value="12"/>
</dbReference>
<dbReference type="PROSITE" id="PS50026">
    <property type="entry name" value="EGF_3"/>
    <property type="match status" value="9"/>
</dbReference>
<dbReference type="PROSITE" id="PS01187">
    <property type="entry name" value="EGF_CA"/>
    <property type="match status" value="5"/>
</dbReference>
<dbReference type="PROSITE" id="PS50825">
    <property type="entry name" value="HYR"/>
    <property type="match status" value="2"/>
</dbReference>
<dbReference type="PROSITE" id="PS51828">
    <property type="entry name" value="PTX_2"/>
    <property type="match status" value="1"/>
</dbReference>
<dbReference type="PROSITE" id="PS50923">
    <property type="entry name" value="SUSHI"/>
    <property type="match status" value="35"/>
</dbReference>
<dbReference type="PROSITE" id="PS50234">
    <property type="entry name" value="VWFA"/>
    <property type="match status" value="1"/>
</dbReference>
<sequence length="3615" mass="393394">MMVTLRLALTLRLTVLLLYWSGCTCWPSHAQQFSLQSLRQTSQARQNLSESAESKVERLGQVFRKNVRLLRERGGCLDLVFLVDESSSVGASNFKSELRFVRKMLSDFPVAPEATRVALVTFSSKSHVVTRADYVSAPKAHQHKCSLFSKEIPSITYRGGGTYTRGAFQRAAQILRQSRENATKVIFLITDGYSNGGDPRPVAAALRERGVEIFTLGIWQGNIRELHEMASQPKDQHCFFVHNFAEFEALARRALHEDLPSGNYIQEDLAQCSSLCDGGKDCCDLMASCKCGTHTGQYDCVCEKGYYGKGLQHECTACPSATYKPEAVAGGASTCLPCPDPHHTSRPGSTDISDCVCLEGYRPHNNTCQAVVCPVLSPPENGFFIQNVCNNQFNSACGVRCLPGFDLQGDGIRLCQPDGTWSGVQPSCRIRSCPDLSPPHHGMLNCSERSAPYRLECLVRCEQGYRLQGRARITCLANSQWSGPQPRCVEVRCPPIVTLKHIHLMPSTCGENEVRTGAVCQLSCPYGYSLIGDSKVKCLPTGNWSDNLHKATCTDVEPPWIQCPGDVITETDEHQRSANVSLSAPMLRDNSGDEVMVQVTPVLNPMQTFPIGTEFITYTATDRTGNKANCSFTVTVVDTEPPLIDRCRSPPTVKATGRKTAVYWEEPQFSDNSGAQLNISSTHSSGDIFPVGETSVYYTATDPSGNNRTCELIITVRGSTCEKPFVPVNGDFSCAKTKEGMNCTLICRQGYSLAQNAVHSYFCANNGIWEPPRSPDRPDCSLNRIANNGFKPFEMLFKASRCDDLNLVRSFSGEFSNVLKNTVPNICGGDDVSCKLEMTLPAQCLEYNYDYPNGFAIGPGGWGSNWGSQNGEDYAYFDSGFAPEHQLQKDASSQHGSHMRTKRHRKITGPTREQKIQIHFNITASIPLPLSRNDSAEIVNQKRLLRALEQLTNRLKRTLAKQPFSTFHVSSEMIVADPKSLESKKATLYCRPGSVLKGRVCVLCPVGTYFSLEYAECESCWRGSYQNEEGQMECKSCPDGSSTPYLHSRSQAECKAQCQPGSSSLTGLETCESCPLGEYQPGFGSQDCLSCPSTTTTVNRGALDVNECGVPCSAGHFSRTGLVPCYPCPRDYYQPEEGRSYCLSCPFYGTTTITGARAIQQCSSFGSSFLPKEESATTAPEVIVRKDYQASSQMFHECLLNPCQNQGTCEEVGVGYVCTCLPGFTGAKCESDIDECDSAPCQNGGLCRDGMGDFQCQCQPGFVGLLCEAEVNECSSSPCLNEGICVDEVNYFSCSCPDGFTGPRCEMEINECASSPCQNEGVCKDLEGGYFCTCAQGFTGDNCEVDVNECYSAPCLNGGTCVDAINDFRCECVNGYRGRLCQVDVDDCELNLCLNGATCVDGVATFTCRCPPGFNGTRCETEMPYSFDLEFEVSGIHGYVMMDGHMPSLTQITCTFWMRSSDTVNYGTPVSYAVEGSDNAFLLIDYNGWVLYVNGKERITDCPAVNDGLWHHIGVTWRSKDGDWRVYIDGSPSDGGKGLSIGTTIPGGGALVLGQDQDQRGDGFNPVESFVGTLSQLNIWNYVLTPQQIRSLASSCPHDLQKGNVFAWPDFLGGVTGRVKTTSKSIFCADCPLVETSVPHLLSSSKAVSPGSKVQFSCSPGFYLVGEPVQLCLNRGQWSHAEPICERVECGPPPDLEHGQYHGEDFYAGSSVLYQCKPGFYLLGESKMQCTNNGKWIGNPPACLDVDECSLGSECDEHASCQNTDGSHICTCIAPYSGDGRNCTEPVKCKDPGVPEFGQREGTNFIMGSEVVFSCKEGYELIGSSQLTCTEEGFWKQDVPYCKALSCPHPTLPKYGILKGANFTYGSKVTFSCEKGYVPLEPIESQCQSDLKWSREPHICQPITCGEPPVVDYAEYTLNGKIYRSTLSYTCIEGYRLQGAMELQCESSGEWTSPPPMCARVDCGKPPPLKDAVIKGDNFTLGSKIYYICKDGYTLLGAETQECLPSGNWTRNSSQCVPRSCGPPPQVDHALPDTGHQLFGDIAIYFCDDGYTAGNNTKLFCNAQGVWAPPDGFGIPHCIANFCQRPPDLPHAILDSINKPKYASNTEVSYKCEEGFVLNTTGTLKCLIGGEWTPSPSDIGCMPVRCSKPESIEKGYVSGNNYGFGAVIAYSCDKGYFIRGEKKRICKASGEWGGVLPTCQPISCPSPPRLANGFIQGQIRKNSYVYNSKVTYACNDGYRLTGKPERTCMANKQWSNSNSLVCVLLTCPTPPDIKNGLYHGSTFEVGSKVEFVCNEGYELIGDTVWTCLKFGNWDKSIIPRCSPVQCPEPPLEENHLVLRGLDSDSGTVELSCEEGYVLHGARTLRCTPSQEWNDSFPVCKQVFCGPPPEVAFGDPSDTQSYFGSVVTYSCMDGFTLRKEGSVHCQANGNWSKPYPQCIPVECPHPEDIPNGIVDVQGLMYLSTAVYSCKAGYDILGNSTVLCGQSGQWIGGIPVCHPVKCAAPKEIPNGSVRYSKLQFSQSITYFCQRGYRIQGPETLTCLENGQWDQEAPTCVPIYCSPPKPIDNGFVEGRDRKFGVTIFYSCFPGFLLVGNNHLTCEDHGWSSSEPKCVLADCGLPPHIDFGDYSKVQELSAEYDMVTSQQLPVDNSFLHGSLVKYHCHSGYEINGAIMLMCREDGTWNGTAPMCTPAQCEAPPSPENGSVMVTDSALGSLAEYSCAEGYELNGQTIRQCISGQQWSDDAPRCLPISCGNPGGIANGEVIGKSFHFKELIHYECHSGFVLEGVETRTCQVDGKWDNKAPLCKEVSCGRPVVSKDVLVRGDDHTFGKRLLFSCNLGFILLGAPTIVCLANGSWNEVPPKCLPANCGQPPSIENGRVTGTDYGYNGMVRYACDIGYVLTGNPTLICRADGLWDDPPPRCDIITCDPPEDISHGYLNGSSFNFDDIVEYICFPGYEVVGSPILRCAAEGVWLGQVPECRPCVCSPPVFKYGSILGRDHTCGASIWFRCDDGYKILGSSEAICDKGGVWSPGVPICTRGRCSIPPPAVPNAVIQGSTAYTIDTVTYRCRPGYHLKGFPHISCGRLGRWGEPNLSCEPISCGVPPLISNAETVGAVLTYGSKAQYRCKEGFELATKTDSITCQSDGTWSKHGVRCRPSPCTLPTNLTHVVITGKQLTPVGGTVIVSCRPGYYLEGPGLSECTVSGKWSPPLASCLPVICEKPLPILNGLVEGISYNYGDVVNFTCQQGFLLQGHSVRTCQGDKTWSGTQPVCAAVSCGPPPVVPNAVASSSGQTYKSIVSYTCRQGTSLVDSQNLTCQANGSWSLPTPICEVPGGCEKITDLLNGKVQEHNLSSGRALEFHCNKGYTLQGESLVMCVGNGSWSSPFPVCLPKPCPPLPHGWTVGSANATQTVFSVGQSVQVSCPKGQRVKSNQGKGIATLTCRSDQTWTPISAVCERVSCGPPLYVSNGVVRGAVFQFGDMVLYSCYAGFTMEGSSRSVCLDNGTWTQPPTCKAVCWRHCQNGGVCQRPNTCSCPEGWMGRFCEEPICILPCLNGGRCVAPYQCECPAGWTGTRCHNAVCSMPCLNGGRCIRPNRCHCSPGWGGYDCSRKRKSAYFHF</sequence>
<proteinExistence type="evidence at protein level"/>
<reference evidence="17" key="1">
    <citation type="journal article" date="2013" name="Nature">
        <title>The zebrafish reference genome sequence and its relationship to the human genome.</title>
        <authorList>
            <person name="Howe K."/>
            <person name="Clark M.D."/>
            <person name="Torroja C.F."/>
            <person name="Torrance J."/>
            <person name="Berthelot C."/>
            <person name="Muffato M."/>
            <person name="Collins J.E."/>
            <person name="Humphray S."/>
            <person name="McLaren K."/>
            <person name="Matthews L."/>
            <person name="McLaren S."/>
            <person name="Sealy I."/>
            <person name="Caccamo M."/>
            <person name="Churcher C."/>
            <person name="Scott C."/>
            <person name="Barrett J.C."/>
            <person name="Koch R."/>
            <person name="Rauch G.J."/>
            <person name="White S."/>
            <person name="Chow W."/>
            <person name="Kilian B."/>
            <person name="Quintais L.T."/>
            <person name="Guerra-Assuncao J.A."/>
            <person name="Zhou Y."/>
            <person name="Gu Y."/>
            <person name="Yen J."/>
            <person name="Vogel J.H."/>
            <person name="Eyre T."/>
            <person name="Redmond S."/>
            <person name="Banerjee R."/>
            <person name="Chi J."/>
            <person name="Fu B."/>
            <person name="Langley E."/>
            <person name="Maguire S.F."/>
            <person name="Laird G.K."/>
            <person name="Lloyd D."/>
            <person name="Kenyon E."/>
            <person name="Donaldson S."/>
            <person name="Sehra H."/>
            <person name="Almeida-King J."/>
            <person name="Loveland J."/>
            <person name="Trevanion S."/>
            <person name="Jones M."/>
            <person name="Quail M."/>
            <person name="Willey D."/>
            <person name="Hunt A."/>
            <person name="Burton J."/>
            <person name="Sims S."/>
            <person name="McLay K."/>
            <person name="Plumb B."/>
            <person name="Davis J."/>
            <person name="Clee C."/>
            <person name="Oliver K."/>
            <person name="Clark R."/>
            <person name="Riddle C."/>
            <person name="Elliot D."/>
            <person name="Threadgold G."/>
            <person name="Harden G."/>
            <person name="Ware D."/>
            <person name="Begum S."/>
            <person name="Mortimore B."/>
            <person name="Kerry G."/>
            <person name="Heath P."/>
            <person name="Phillimore B."/>
            <person name="Tracey A."/>
            <person name="Corby N."/>
            <person name="Dunn M."/>
            <person name="Johnson C."/>
            <person name="Wood J."/>
            <person name="Clark S."/>
            <person name="Pelan S."/>
            <person name="Griffiths G."/>
            <person name="Smith M."/>
            <person name="Glithero R."/>
            <person name="Howden P."/>
            <person name="Barker N."/>
            <person name="Lloyd C."/>
            <person name="Stevens C."/>
            <person name="Harley J."/>
            <person name="Holt K."/>
            <person name="Panagiotidis G."/>
            <person name="Lovell J."/>
            <person name="Beasley H."/>
            <person name="Henderson C."/>
            <person name="Gordon D."/>
            <person name="Auger K."/>
            <person name="Wright D."/>
            <person name="Collins J."/>
            <person name="Raisen C."/>
            <person name="Dyer L."/>
            <person name="Leung K."/>
            <person name="Robertson L."/>
            <person name="Ambridge K."/>
            <person name="Leongamornlert D."/>
            <person name="McGuire S."/>
            <person name="Gilderthorp R."/>
            <person name="Griffiths C."/>
            <person name="Manthravadi D."/>
            <person name="Nichol S."/>
            <person name="Barker G."/>
            <person name="Whitehead S."/>
            <person name="Kay M."/>
            <person name="Brown J."/>
            <person name="Murnane C."/>
            <person name="Gray E."/>
            <person name="Humphries M."/>
            <person name="Sycamore N."/>
            <person name="Barker D."/>
            <person name="Saunders D."/>
            <person name="Wallis J."/>
            <person name="Babbage A."/>
            <person name="Hammond S."/>
            <person name="Mashreghi-Mohammadi M."/>
            <person name="Barr L."/>
            <person name="Martin S."/>
            <person name="Wray P."/>
            <person name="Ellington A."/>
            <person name="Matthews N."/>
            <person name="Ellwood M."/>
            <person name="Woodmansey R."/>
            <person name="Clark G."/>
            <person name="Cooper J."/>
            <person name="Tromans A."/>
            <person name="Grafham D."/>
            <person name="Skuce C."/>
            <person name="Pandian R."/>
            <person name="Andrews R."/>
            <person name="Harrison E."/>
            <person name="Kimberley A."/>
            <person name="Garnett J."/>
            <person name="Fosker N."/>
            <person name="Hall R."/>
            <person name="Garner P."/>
            <person name="Kelly D."/>
            <person name="Bird C."/>
            <person name="Palmer S."/>
            <person name="Gehring I."/>
            <person name="Berger A."/>
            <person name="Dooley C.M."/>
            <person name="Ersan-Urun Z."/>
            <person name="Eser C."/>
            <person name="Geiger H."/>
            <person name="Geisler M."/>
            <person name="Karotki L."/>
            <person name="Kirn A."/>
            <person name="Konantz J."/>
            <person name="Konantz M."/>
            <person name="Oberlander M."/>
            <person name="Rudolph-Geiger S."/>
            <person name="Teucke M."/>
            <person name="Lanz C."/>
            <person name="Raddatz G."/>
            <person name="Osoegawa K."/>
            <person name="Zhu B."/>
            <person name="Rapp A."/>
            <person name="Widaa S."/>
            <person name="Langford C."/>
            <person name="Yang F."/>
            <person name="Schuster S.C."/>
            <person name="Carter N.P."/>
            <person name="Harrow J."/>
            <person name="Ning Z."/>
            <person name="Herrero J."/>
            <person name="Searle S.M."/>
            <person name="Enright A."/>
            <person name="Geisler R."/>
            <person name="Plasterk R.H."/>
            <person name="Lee C."/>
            <person name="Westerfield M."/>
            <person name="de Jong P.J."/>
            <person name="Zon L.I."/>
            <person name="Postlethwait J.H."/>
            <person name="Nusslein-Volhard C."/>
            <person name="Hubbard T.J."/>
            <person name="Roest Crollius H."/>
            <person name="Rogers J."/>
            <person name="Stemple D.L."/>
        </authorList>
    </citation>
    <scope>NUCLEOTIDE SEQUENCE [LARGE SCALE GENOMIC DNA]</scope>
    <source>
        <strain evidence="17">Tuebingen</strain>
    </source>
</reference>
<reference evidence="16" key="2">
    <citation type="journal article" date="2017" name="Circ. Res.">
        <title>An Evolutionarily Conserved Role for Polydom/Svep1 During Lymphatic Vessel Formation.</title>
        <authorList>
            <person name="Karpanen T."/>
            <person name="Padberg Y."/>
            <person name="van de Pavert S.A."/>
            <person name="Dierkes C."/>
            <person name="Morooka N."/>
            <person name="Peterson-Maduro J."/>
            <person name="van de Hoek G."/>
            <person name="Adrian M."/>
            <person name="Mochizuki N."/>
            <person name="Sekiguchi K."/>
            <person name="Kiefer F."/>
            <person name="Schulte D."/>
            <person name="Schulte-Merker S."/>
        </authorList>
    </citation>
    <scope>FUNCTION</scope>
    <scope>DEVELOPMENTAL STAGE</scope>
    <scope>DISRUPTION PHENOTYPE</scope>
</reference>
<reference evidence="16" key="3">
    <citation type="journal article" date="2017" name="Circ. Res.">
        <title>Polydom Is an Extracellular Matrix Protein Involved in Lymphatic Vessel Remodeling.</title>
        <authorList>
            <person name="Morooka N."/>
            <person name="Futaki S."/>
            <person name="Sato-Nishiuchi R."/>
            <person name="Nishino M."/>
            <person name="Totani Y."/>
            <person name="Shimono C."/>
            <person name="Nakano I."/>
            <person name="Nakajima H."/>
            <person name="Mochizuki N."/>
            <person name="Sekiguchi K."/>
        </authorList>
    </citation>
    <scope>FUNCTION</scope>
    <scope>DEVELOPMENTAL STAGE</scope>
    <scope>DISRUPTION PHENOTYPE</scope>
</reference>
<reference evidence="16" key="4">
    <citation type="journal article" date="2017" name="Exp. Dermatol.">
        <title>SVEP1 plays a crucial role in epidermal differentiation.</title>
        <authorList>
            <person name="Samuelov L."/>
            <person name="Li Q."/>
            <person name="Bochner R."/>
            <person name="Najor N.A."/>
            <person name="Albrecht L."/>
            <person name="Malchin N."/>
            <person name="Goldsmith T."/>
            <person name="Grafi-Cohen M."/>
            <person name="Vodo D."/>
            <person name="Fainberg G."/>
            <person name="Meilik B."/>
            <person name="Goldberg I."/>
            <person name="Warshauer E."/>
            <person name="Rogers T."/>
            <person name="Edie S."/>
            <person name="Ishida-Yamamoto A."/>
            <person name="Burzenski L."/>
            <person name="Erez N."/>
            <person name="Murray S.A."/>
            <person name="Irvine A.D."/>
            <person name="Shultz L."/>
            <person name="Green K.J."/>
            <person name="Uitto J."/>
            <person name="Sprecher E."/>
            <person name="Sarig O."/>
        </authorList>
    </citation>
    <scope>FUNCTION</scope>
    <scope>DISRUPTION PHENOTYPE</scope>
</reference>
<reference evidence="16" key="5">
    <citation type="journal article" date="2022" name="Development">
        <title>Svep1 stabilises developmental vascular anastomosis in reduced flow conditions.</title>
        <authorList>
            <person name="Coxam B."/>
            <person name="Collins R.T."/>
            <person name="Hussmann M."/>
            <person name="Huisman Y."/>
            <person name="Meier K."/>
            <person name="Jung S."/>
            <person name="Bartels-Klein E."/>
            <person name="Szymborska A."/>
            <person name="Finotto L."/>
            <person name="Helker C.S.M."/>
            <person name="Stainier D.Y.R."/>
            <person name="Schulte-Merker S."/>
            <person name="Gerhardt H."/>
        </authorList>
    </citation>
    <scope>FUNCTION</scope>
    <scope>DEVELOPMENTAL STAGE</scope>
    <scope>DISRUPTION PHENOTYPE</scope>
</reference>
<reference evidence="16" key="6">
    <citation type="journal article" date="2023" name="Elife">
        <title>Svep1 is a binding ligand of Tie1 and affects specific aspects of facial lymphatic development in a Vegfc-independent manner.</title>
        <authorList>
            <person name="Hussmann M."/>
            <person name="Schulte D."/>
            <person name="Weischer S."/>
            <person name="Carlantoni C."/>
            <person name="Nakajima H."/>
            <person name="Mochizuki N."/>
            <person name="Stainier D.Y.R."/>
            <person name="Zobel T."/>
            <person name="Koch M."/>
            <person name="Schulte-Merker S."/>
        </authorList>
    </citation>
    <scope>FUNCTION</scope>
    <scope>INTERACTION WITH TIE1 AND TEK</scope>
    <scope>DEVELOPMENTAL STAGE</scope>
    <scope>DISRUPTION PHENOTYPE</scope>
</reference>
<feature type="signal peptide" evidence="3">
    <location>
        <begin position="1"/>
        <end position="25"/>
    </location>
</feature>
<feature type="chain" id="PRO_5039851615" description="Sushi, von Willebrand factor type A, EGF and pentraxin domain-containing protein 1" evidence="3">
    <location>
        <begin position="26"/>
        <end position="3615"/>
    </location>
</feature>
<feature type="domain" description="VWFA" evidence="6">
    <location>
        <begin position="78"/>
        <end position="259"/>
    </location>
</feature>
<feature type="domain" description="Sushi 1" evidence="7">
    <location>
        <begin position="371"/>
        <end position="430"/>
    </location>
</feature>
<feature type="domain" description="Sushi 2" evidence="7">
    <location>
        <begin position="431"/>
        <end position="490"/>
    </location>
</feature>
<feature type="domain" description="Sushi 3" evidence="7">
    <location>
        <begin position="491"/>
        <end position="555"/>
    </location>
</feature>
<feature type="domain" description="HYR 1" evidence="5">
    <location>
        <begin position="554"/>
        <end position="636"/>
    </location>
</feature>
<feature type="domain" description="HYR 2" evidence="5">
    <location>
        <begin position="637"/>
        <end position="718"/>
    </location>
</feature>
<feature type="domain" description="Sushi 4" evidence="7">
    <location>
        <begin position="719"/>
        <end position="782"/>
    </location>
</feature>
<feature type="domain" description="EGF-like 1" evidence="4">
    <location>
        <begin position="1194"/>
        <end position="1230"/>
    </location>
</feature>
<feature type="domain" description="EGF-like 2; calcium-binding" evidence="4">
    <location>
        <begin position="1232"/>
        <end position="1268"/>
    </location>
</feature>
<feature type="domain" description="EGF-like 3; calcium-binding" evidence="4">
    <location>
        <begin position="1270"/>
        <end position="1306"/>
    </location>
</feature>
<feature type="domain" description="EGF-like 4; calcium-binding" evidence="4">
    <location>
        <begin position="1308"/>
        <end position="1344"/>
    </location>
</feature>
<feature type="domain" description="EGF-like 5; calcium-binding" evidence="4">
    <location>
        <begin position="1346"/>
        <end position="1382"/>
    </location>
</feature>
<feature type="domain" description="EGF-like 6; calcium-binding" evidence="4">
    <location>
        <begin position="1384"/>
        <end position="1420"/>
    </location>
</feature>
<feature type="domain" description="Pentraxin (PTX)" evidence="9">
    <location>
        <begin position="1425"/>
        <end position="1628"/>
    </location>
</feature>
<feature type="domain" description="Sushi 5" evidence="7">
    <location>
        <begin position="1629"/>
        <end position="1687"/>
    </location>
</feature>
<feature type="domain" description="Sushi 6" evidence="7">
    <location>
        <begin position="1688"/>
        <end position="1745"/>
    </location>
</feature>
<feature type="domain" description="EGF-like 7; calcium-binding" evidence="4">
    <location>
        <begin position="1745"/>
        <end position="1784"/>
    </location>
</feature>
<feature type="domain" description="Sushi 7" evidence="7">
    <location>
        <begin position="1787"/>
        <end position="1844"/>
    </location>
</feature>
<feature type="domain" description="Sushi 8" evidence="7">
    <location>
        <begin position="1845"/>
        <end position="1902"/>
    </location>
</feature>
<feature type="domain" description="Sushi 9" evidence="7">
    <location>
        <begin position="1903"/>
        <end position="1960"/>
    </location>
</feature>
<feature type="domain" description="Sushi 10" evidence="7">
    <location>
        <begin position="1961"/>
        <end position="2018"/>
    </location>
</feature>
<feature type="domain" description="Sushi 11" evidence="7">
    <location>
        <begin position="2019"/>
        <end position="2080"/>
    </location>
</feature>
<feature type="domain" description="Sushi 12" evidence="7">
    <location>
        <begin position="2081"/>
        <end position="2143"/>
    </location>
</feature>
<feature type="domain" description="Sushi 13" evidence="7">
    <location>
        <begin position="2144"/>
        <end position="2201"/>
    </location>
</feature>
<feature type="domain" description="Sushi 14" evidence="7">
    <location>
        <begin position="2202"/>
        <end position="2264"/>
    </location>
</feature>
<feature type="domain" description="Sushi 15" evidence="7">
    <location>
        <begin position="2265"/>
        <end position="2323"/>
    </location>
</feature>
<feature type="domain" description="Sushi 16" evidence="7">
    <location>
        <begin position="2324"/>
        <end position="2381"/>
    </location>
</feature>
<feature type="domain" description="Sushi 17" evidence="7">
    <location>
        <begin position="2382"/>
        <end position="2439"/>
    </location>
</feature>
<feature type="domain" description="Sushi 18" evidence="7">
    <location>
        <begin position="2440"/>
        <end position="2497"/>
    </location>
</feature>
<feature type="domain" description="Sushi 19" evidence="7">
    <location>
        <begin position="2498"/>
        <end position="2555"/>
    </location>
</feature>
<feature type="domain" description="Sushi 20" evidence="7">
    <location>
        <begin position="2556"/>
        <end position="2612"/>
    </location>
</feature>
<feature type="domain" description="Sushi 21" evidence="7">
    <location>
        <begin position="2613"/>
        <end position="2689"/>
    </location>
</feature>
<feature type="domain" description="Sushi 22" evidence="7">
    <location>
        <begin position="2690"/>
        <end position="2747"/>
    </location>
</feature>
<feature type="domain" description="Sushi 23" evidence="7">
    <location>
        <begin position="2748"/>
        <end position="2805"/>
    </location>
</feature>
<feature type="domain" description="Sushi 24" evidence="7">
    <location>
        <begin position="2806"/>
        <end position="2863"/>
    </location>
</feature>
<feature type="domain" description="Sushi 25" evidence="7">
    <location>
        <begin position="2864"/>
        <end position="2921"/>
    </location>
</feature>
<feature type="domain" description="Sushi 26" evidence="7">
    <location>
        <begin position="2922"/>
        <end position="2979"/>
    </location>
</feature>
<feature type="domain" description="Sushi 27" evidence="7">
    <location>
        <begin position="2980"/>
        <end position="3036"/>
    </location>
</feature>
<feature type="domain" description="Sushi 28" evidence="7">
    <location>
        <begin position="3037"/>
        <end position="3095"/>
    </location>
</feature>
<feature type="domain" description="Sushi 29" evidence="7">
    <location>
        <begin position="3096"/>
        <end position="3154"/>
    </location>
</feature>
<feature type="domain" description="Sushi 30" evidence="7">
    <location>
        <begin position="3155"/>
        <end position="3213"/>
    </location>
</feature>
<feature type="domain" description="Sushi 31" evidence="7">
    <location>
        <begin position="3214"/>
        <end position="3271"/>
    </location>
</feature>
<feature type="domain" description="Sushi 32" evidence="7">
    <location>
        <begin position="3272"/>
        <end position="3329"/>
    </location>
</feature>
<feature type="domain" description="Sushi 33" evidence="7">
    <location>
        <begin position="3331"/>
        <end position="3388"/>
    </location>
</feature>
<feature type="domain" description="Sushi 34" evidence="7">
    <location>
        <begin position="3389"/>
        <end position="3454"/>
    </location>
</feature>
<feature type="domain" description="Sushi 35" evidence="7">
    <location>
        <begin position="3455"/>
        <end position="3511"/>
    </location>
</feature>
<feature type="domain" description="EGF-like 8" evidence="4">
    <location>
        <begin position="3541"/>
        <end position="3573"/>
    </location>
</feature>
<feature type="domain" description="EGF-like 9" evidence="4">
    <location>
        <begin position="3574"/>
        <end position="3605"/>
    </location>
</feature>
<feature type="glycosylation site" description="N-linked (GlcNAc...) asparagine" evidence="8">
    <location>
        <position position="47"/>
    </location>
</feature>
<feature type="glycosylation site" description="N-linked (GlcNAc...) asparagine" evidence="8">
    <location>
        <position position="181"/>
    </location>
</feature>
<feature type="glycosylation site" description="N-linked (GlcNAc...) asparagine" evidence="8">
    <location>
        <position position="365"/>
    </location>
</feature>
<feature type="glycosylation site" description="N-linked (GlcNAc...) asparagine" evidence="8">
    <location>
        <position position="445"/>
    </location>
</feature>
<feature type="glycosylation site" description="N-linked (GlcNAc...) asparagine" evidence="8">
    <location>
        <position position="543"/>
    </location>
</feature>
<feature type="glycosylation site" description="N-linked (GlcNAc...) asparagine" evidence="8">
    <location>
        <position position="579"/>
    </location>
</feature>
<feature type="glycosylation site" description="N-linked (GlcNAc...) asparagine" evidence="8">
    <location>
        <position position="629"/>
    </location>
</feature>
<feature type="glycosylation site" description="N-linked (GlcNAc...) asparagine" evidence="8">
    <location>
        <position position="678"/>
    </location>
</feature>
<feature type="glycosylation site" description="N-linked (GlcNAc...) asparagine" evidence="8">
    <location>
        <position position="707"/>
    </location>
</feature>
<feature type="glycosylation site" description="N-linked (GlcNAc...) asparagine" evidence="8">
    <location>
        <position position="742"/>
    </location>
</feature>
<feature type="glycosylation site" description="N-linked (GlcNAc...) asparagine" evidence="8">
    <location>
        <position position="921"/>
    </location>
</feature>
<feature type="glycosylation site" description="N-linked (GlcNAc...) asparagine" evidence="8">
    <location>
        <position position="933"/>
    </location>
</feature>
<feature type="glycosylation site" description="N-linked (GlcNAc...) asparagine" evidence="8">
    <location>
        <position position="1415"/>
    </location>
</feature>
<feature type="disulfide bond" evidence="7">
    <location>
        <begin position="373"/>
        <end position="415"/>
    </location>
</feature>
<feature type="disulfide bond" evidence="7">
    <location>
        <begin position="401"/>
        <end position="428"/>
    </location>
</feature>
<feature type="disulfide bond" evidence="7">
    <location>
        <begin position="433"/>
        <end position="475"/>
    </location>
</feature>
<feature type="disulfide bond" evidence="7">
    <location>
        <begin position="461"/>
        <end position="488"/>
    </location>
</feature>
<feature type="disulfide bond" evidence="7">
    <location>
        <begin position="493"/>
        <end position="538"/>
    </location>
</feature>
<feature type="disulfide bond" evidence="7">
    <location>
        <begin position="524"/>
        <end position="553"/>
    </location>
</feature>
<feature type="disulfide bond" evidence="7">
    <location>
        <begin position="721"/>
        <end position="763"/>
    </location>
</feature>
<feature type="disulfide bond" evidence="7">
    <location>
        <begin position="747"/>
        <end position="780"/>
    </location>
</feature>
<feature type="disulfide bond" evidence="4">
    <location>
        <begin position="1198"/>
        <end position="1209"/>
    </location>
</feature>
<feature type="disulfide bond" evidence="4">
    <location>
        <begin position="1203"/>
        <end position="1218"/>
    </location>
</feature>
<feature type="disulfide bond" evidence="4">
    <location>
        <begin position="1220"/>
        <end position="1229"/>
    </location>
</feature>
<feature type="disulfide bond" evidence="4">
    <location>
        <begin position="1236"/>
        <end position="1247"/>
    </location>
</feature>
<feature type="disulfide bond" evidence="4">
    <location>
        <begin position="1241"/>
        <end position="1256"/>
    </location>
</feature>
<feature type="disulfide bond" evidence="4">
    <location>
        <begin position="1258"/>
        <end position="1267"/>
    </location>
</feature>
<feature type="disulfide bond" evidence="4">
    <location>
        <begin position="1274"/>
        <end position="1285"/>
    </location>
</feature>
<feature type="disulfide bond" evidence="4">
    <location>
        <begin position="1279"/>
        <end position="1294"/>
    </location>
</feature>
<feature type="disulfide bond" evidence="4">
    <location>
        <begin position="1296"/>
        <end position="1305"/>
    </location>
</feature>
<feature type="disulfide bond" evidence="4">
    <location>
        <begin position="1312"/>
        <end position="1323"/>
    </location>
</feature>
<feature type="disulfide bond" evidence="4">
    <location>
        <begin position="1317"/>
        <end position="1332"/>
    </location>
</feature>
<feature type="disulfide bond" evidence="4">
    <location>
        <begin position="1334"/>
        <end position="1343"/>
    </location>
</feature>
<feature type="disulfide bond" evidence="4">
    <location>
        <begin position="1350"/>
        <end position="1361"/>
    </location>
</feature>
<feature type="disulfide bond" evidence="4">
    <location>
        <begin position="1355"/>
        <end position="1370"/>
    </location>
</feature>
<feature type="disulfide bond" evidence="4">
    <location>
        <begin position="1372"/>
        <end position="1381"/>
    </location>
</feature>
<feature type="disulfide bond" evidence="4">
    <location>
        <begin position="1388"/>
        <end position="1399"/>
    </location>
</feature>
<feature type="disulfide bond" evidence="4">
    <location>
        <begin position="1393"/>
        <end position="1408"/>
    </location>
</feature>
<feature type="disulfide bond" evidence="4">
    <location>
        <begin position="1410"/>
        <end position="1419"/>
    </location>
</feature>
<feature type="disulfide bond" evidence="7">
    <location>
        <begin position="1631"/>
        <end position="1672"/>
    </location>
</feature>
<feature type="disulfide bond" evidence="7">
    <location>
        <begin position="1658"/>
        <end position="1685"/>
    </location>
</feature>
<feature type="disulfide bond" evidence="7">
    <location>
        <begin position="1690"/>
        <end position="1730"/>
    </location>
</feature>
<feature type="disulfide bond" evidence="7">
    <location>
        <begin position="1716"/>
        <end position="1743"/>
    </location>
</feature>
<feature type="disulfide bond" evidence="4">
    <location>
        <begin position="1749"/>
        <end position="1761"/>
    </location>
</feature>
<feature type="disulfide bond" evidence="4">
    <location>
        <begin position="1755"/>
        <end position="1770"/>
    </location>
</feature>
<feature type="disulfide bond" evidence="4">
    <location>
        <begin position="1772"/>
        <end position="1783"/>
    </location>
</feature>
<feature type="disulfide bond" evidence="7">
    <location>
        <begin position="1789"/>
        <end position="1829"/>
    </location>
</feature>
<feature type="disulfide bond" evidence="7">
    <location>
        <begin position="1815"/>
        <end position="1842"/>
    </location>
</feature>
<feature type="disulfide bond" evidence="7">
    <location>
        <begin position="1847"/>
        <end position="1887"/>
    </location>
</feature>
<feature type="disulfide bond" evidence="7">
    <location>
        <begin position="1873"/>
        <end position="1900"/>
    </location>
</feature>
<feature type="disulfide bond" evidence="7">
    <location>
        <begin position="1905"/>
        <end position="1945"/>
    </location>
</feature>
<feature type="disulfide bond" evidence="7">
    <location>
        <begin position="1931"/>
        <end position="1958"/>
    </location>
</feature>
<feature type="disulfide bond" evidence="7">
    <location>
        <begin position="1963"/>
        <end position="2003"/>
    </location>
</feature>
<feature type="disulfide bond" evidence="7">
    <location>
        <begin position="1989"/>
        <end position="2016"/>
    </location>
</feature>
<feature type="disulfide bond" evidence="7">
    <location>
        <begin position="2021"/>
        <end position="2061"/>
    </location>
</feature>
<feature type="disulfide bond" evidence="7">
    <location>
        <begin position="2047"/>
        <end position="2078"/>
    </location>
</feature>
<feature type="disulfide bond" evidence="7">
    <location>
        <begin position="2083"/>
        <end position="2126"/>
    </location>
</feature>
<feature type="disulfide bond" evidence="7">
    <location>
        <begin position="2112"/>
        <end position="2141"/>
    </location>
</feature>
<feature type="disulfide bond" evidence="7">
    <location>
        <begin position="2146"/>
        <end position="2186"/>
    </location>
</feature>
<feature type="disulfide bond" evidence="7">
    <location>
        <begin position="2172"/>
        <end position="2199"/>
    </location>
</feature>
<feature type="disulfide bond" evidence="7">
    <location>
        <begin position="2204"/>
        <end position="2248"/>
    </location>
</feature>
<feature type="disulfide bond" evidence="7">
    <location>
        <begin position="2234"/>
        <end position="2262"/>
    </location>
</feature>
<feature type="disulfide bond" evidence="7">
    <location>
        <begin position="2267"/>
        <end position="2307"/>
    </location>
</feature>
<feature type="disulfide bond" evidence="7">
    <location>
        <begin position="2293"/>
        <end position="2321"/>
    </location>
</feature>
<feature type="disulfide bond" evidence="7">
    <location>
        <begin position="2326"/>
        <end position="2366"/>
    </location>
</feature>
<feature type="disulfide bond" evidence="7">
    <location>
        <begin position="2352"/>
        <end position="2379"/>
    </location>
</feature>
<feature type="disulfide bond" evidence="7">
    <location>
        <begin position="2384"/>
        <end position="2424"/>
    </location>
</feature>
<feature type="disulfide bond" evidence="7">
    <location>
        <begin position="2410"/>
        <end position="2437"/>
    </location>
</feature>
<feature type="disulfide bond" evidence="7">
    <location>
        <begin position="2442"/>
        <end position="2482"/>
    </location>
</feature>
<feature type="disulfide bond" evidence="7">
    <location>
        <begin position="2468"/>
        <end position="2495"/>
    </location>
</feature>
<feature type="disulfide bond" evidence="7">
    <location>
        <begin position="2500"/>
        <end position="2540"/>
    </location>
</feature>
<feature type="disulfide bond" evidence="7">
    <location>
        <begin position="2526"/>
        <end position="2553"/>
    </location>
</feature>
<feature type="disulfide bond" evidence="7">
    <location>
        <begin position="2558"/>
        <end position="2598"/>
    </location>
</feature>
<feature type="disulfide bond" evidence="7">
    <location>
        <begin position="2584"/>
        <end position="2610"/>
    </location>
</feature>
<feature type="disulfide bond" evidence="7">
    <location>
        <begin position="2615"/>
        <end position="2674"/>
    </location>
</feature>
<feature type="disulfide bond" evidence="7">
    <location>
        <begin position="2660"/>
        <end position="2687"/>
    </location>
</feature>
<feature type="disulfide bond" evidence="7">
    <location>
        <begin position="2692"/>
        <end position="2732"/>
    </location>
</feature>
<feature type="disulfide bond" evidence="7">
    <location>
        <begin position="2718"/>
        <end position="2745"/>
    </location>
</feature>
<feature type="disulfide bond" evidence="7">
    <location>
        <begin position="2750"/>
        <end position="2790"/>
    </location>
</feature>
<feature type="disulfide bond" evidence="7">
    <location>
        <begin position="2776"/>
        <end position="2803"/>
    </location>
</feature>
<feature type="disulfide bond" evidence="7">
    <location>
        <begin position="2808"/>
        <end position="2848"/>
    </location>
</feature>
<feature type="disulfide bond" evidence="7">
    <location>
        <begin position="2834"/>
        <end position="2861"/>
    </location>
</feature>
<feature type="disulfide bond" evidence="7">
    <location>
        <begin position="2866"/>
        <end position="2906"/>
    </location>
</feature>
<feature type="disulfide bond" evidence="7">
    <location>
        <begin position="2892"/>
        <end position="2919"/>
    </location>
</feature>
<feature type="disulfide bond" evidence="7">
    <location>
        <begin position="2924"/>
        <end position="2964"/>
    </location>
</feature>
<feature type="disulfide bond" evidence="7">
    <location>
        <begin position="2950"/>
        <end position="2977"/>
    </location>
</feature>
<feature type="disulfide bond" evidence="7">
    <location>
        <begin position="2982"/>
        <end position="3021"/>
    </location>
</feature>
<feature type="disulfide bond" evidence="7">
    <location>
        <begin position="3007"/>
        <end position="3034"/>
    </location>
</feature>
<feature type="disulfide bond" evidence="7">
    <location>
        <begin position="3039"/>
        <end position="3080"/>
    </location>
</feature>
<feature type="disulfide bond" evidence="7">
    <location>
        <begin position="3066"/>
        <end position="3093"/>
    </location>
</feature>
<feature type="disulfide bond" evidence="7">
    <location>
        <begin position="3098"/>
        <end position="3139"/>
    </location>
</feature>
<feature type="disulfide bond" evidence="7">
    <location>
        <begin position="3124"/>
        <end position="3152"/>
    </location>
</feature>
<feature type="disulfide bond" evidence="7">
    <location>
        <begin position="3157"/>
        <end position="3198"/>
    </location>
</feature>
<feature type="disulfide bond" evidence="7">
    <location>
        <begin position="3184"/>
        <end position="3211"/>
    </location>
</feature>
<feature type="disulfide bond" evidence="7">
    <location>
        <begin position="3216"/>
        <end position="3256"/>
    </location>
</feature>
<feature type="disulfide bond" evidence="7">
    <location>
        <begin position="3242"/>
        <end position="3269"/>
    </location>
</feature>
<feature type="disulfide bond" evidence="7">
    <location>
        <begin position="3274"/>
        <end position="3314"/>
    </location>
</feature>
<feature type="disulfide bond" evidence="7">
    <location>
        <begin position="3300"/>
        <end position="3327"/>
    </location>
</feature>
<feature type="disulfide bond" evidence="7">
    <location>
        <begin position="3333"/>
        <end position="3373"/>
    </location>
</feature>
<feature type="disulfide bond" evidence="7">
    <location>
        <begin position="3359"/>
        <end position="3386"/>
    </location>
</feature>
<feature type="disulfide bond" evidence="7">
    <location>
        <begin position="3391"/>
        <end position="3439"/>
    </location>
</feature>
<feature type="disulfide bond" evidence="7">
    <location>
        <begin position="3420"/>
        <end position="3452"/>
    </location>
</feature>
<feature type="disulfide bond" evidence="7">
    <location>
        <begin position="3457"/>
        <end position="3497"/>
    </location>
</feature>
<feature type="disulfide bond" evidence="7">
    <location>
        <begin position="3483"/>
        <end position="3509"/>
    </location>
</feature>
<feature type="disulfide bond" evidence="4">
    <location>
        <begin position="3545"/>
        <end position="3555"/>
    </location>
</feature>
<feature type="disulfide bond" evidence="4">
    <location>
        <begin position="3549"/>
        <end position="3561"/>
    </location>
</feature>
<feature type="disulfide bond" evidence="4">
    <location>
        <begin position="3563"/>
        <end position="3572"/>
    </location>
</feature>
<feature type="disulfide bond" evidence="4">
    <location>
        <begin position="3577"/>
        <end position="3587"/>
    </location>
</feature>
<feature type="disulfide bond" evidence="4">
    <location>
        <begin position="3581"/>
        <end position="3593"/>
    </location>
</feature>
<feature type="disulfide bond" evidence="4">
    <location>
        <begin position="3595"/>
        <end position="3604"/>
    </location>
</feature>
<gene>
    <name evidence="18" type="primary">svep1</name>
</gene>
<protein>
    <recommendedName>
        <fullName evidence="18">Sushi, von Willebrand factor type A, EGF and pentraxin domain-containing protein 1</fullName>
    </recommendedName>
    <alternativeName>
        <fullName evidence="15">Polydom</fullName>
    </alternativeName>
</protein>
<organism>
    <name type="scientific">Danio rerio</name>
    <name type="common">Zebrafish</name>
    <name type="synonym">Brachydanio rerio</name>
    <dbReference type="NCBI Taxonomy" id="7955"/>
    <lineage>
        <taxon>Eukaryota</taxon>
        <taxon>Metazoa</taxon>
        <taxon>Chordata</taxon>
        <taxon>Craniata</taxon>
        <taxon>Vertebrata</taxon>
        <taxon>Euteleostomi</taxon>
        <taxon>Actinopterygii</taxon>
        <taxon>Neopterygii</taxon>
        <taxon>Teleostei</taxon>
        <taxon>Ostariophysi</taxon>
        <taxon>Cypriniformes</taxon>
        <taxon>Danionidae</taxon>
        <taxon>Danioninae</taxon>
        <taxon>Danio</taxon>
    </lineage>
</organism>
<name>SVEP1_DANRE</name>
<accession>A0A1D5NSM8</accession>
<accession>A0A8N7UV67</accession>
<keyword id="KW-0106">Calcium</keyword>
<keyword id="KW-0130">Cell adhesion</keyword>
<keyword id="KW-0963">Cytoplasm</keyword>
<keyword id="KW-1015">Disulfide bond</keyword>
<keyword id="KW-0245">EGF-like domain</keyword>
<keyword id="KW-0325">Glycoprotein</keyword>
<keyword id="KW-0472">Membrane</keyword>
<keyword id="KW-0539">Nucleus</keyword>
<keyword id="KW-1185">Reference proteome</keyword>
<keyword id="KW-0677">Repeat</keyword>
<keyword id="KW-0964">Secreted</keyword>
<keyword id="KW-0732">Signal</keyword>
<keyword id="KW-0768">Sushi</keyword>
<evidence type="ECO:0000250" key="1">
    <source>
        <dbReference type="UniProtKB" id="A2AVA0"/>
    </source>
</evidence>
<evidence type="ECO:0000250" key="2">
    <source>
        <dbReference type="UniProtKB" id="Q4LDE5"/>
    </source>
</evidence>
<evidence type="ECO:0000255" key="3"/>
<evidence type="ECO:0000255" key="4">
    <source>
        <dbReference type="PROSITE-ProRule" id="PRU00076"/>
    </source>
</evidence>
<evidence type="ECO:0000255" key="5">
    <source>
        <dbReference type="PROSITE-ProRule" id="PRU00113"/>
    </source>
</evidence>
<evidence type="ECO:0000255" key="6">
    <source>
        <dbReference type="PROSITE-ProRule" id="PRU00219"/>
    </source>
</evidence>
<evidence type="ECO:0000255" key="7">
    <source>
        <dbReference type="PROSITE-ProRule" id="PRU00302"/>
    </source>
</evidence>
<evidence type="ECO:0000255" key="8">
    <source>
        <dbReference type="PROSITE-ProRule" id="PRU00498"/>
    </source>
</evidence>
<evidence type="ECO:0000255" key="9">
    <source>
        <dbReference type="PROSITE-ProRule" id="PRU01172"/>
    </source>
</evidence>
<evidence type="ECO:0000269" key="10">
    <source>
    </source>
</evidence>
<evidence type="ECO:0000269" key="11">
    <source>
    </source>
</evidence>
<evidence type="ECO:0000269" key="12">
    <source>
    </source>
</evidence>
<evidence type="ECO:0000269" key="13">
    <source>
    </source>
</evidence>
<evidence type="ECO:0000269" key="14">
    <source>
    </source>
</evidence>
<evidence type="ECO:0000303" key="15">
    <source>
    </source>
</evidence>
<evidence type="ECO:0000305" key="16"/>
<evidence type="ECO:0000312" key="17">
    <source>
        <dbReference type="Proteomes" id="UP000000437"/>
    </source>
</evidence>
<evidence type="ECO:0000312" key="18">
    <source>
        <dbReference type="ZFIN" id="ZDB-GENE-110726-1"/>
    </source>
</evidence>